<reference key="1">
    <citation type="journal article" date="2006" name="Proc. Natl. Acad. Sci. U.S.A.">
        <title>Identification of genes subject to positive selection in uropathogenic strains of Escherichia coli: a comparative genomics approach.</title>
        <authorList>
            <person name="Chen S.L."/>
            <person name="Hung C.-S."/>
            <person name="Xu J."/>
            <person name="Reigstad C.S."/>
            <person name="Magrini V."/>
            <person name="Sabo A."/>
            <person name="Blasiar D."/>
            <person name="Bieri T."/>
            <person name="Meyer R.R."/>
            <person name="Ozersky P."/>
            <person name="Armstrong J.R."/>
            <person name="Fulton R.S."/>
            <person name="Latreille J.P."/>
            <person name="Spieth J."/>
            <person name="Hooton T.M."/>
            <person name="Mardis E.R."/>
            <person name="Hultgren S.J."/>
            <person name="Gordon J.I."/>
        </authorList>
    </citation>
    <scope>NUCLEOTIDE SEQUENCE [LARGE SCALE GENOMIC DNA]</scope>
    <source>
        <strain>UTI89 / UPEC</strain>
    </source>
</reference>
<feature type="chain" id="PRO_1000001283" description="LexA repressor">
    <location>
        <begin position="1"/>
        <end position="202"/>
    </location>
</feature>
<feature type="DNA-binding region" description="H-T-H motif" evidence="1">
    <location>
        <begin position="28"/>
        <end position="48"/>
    </location>
</feature>
<feature type="active site" description="For autocatalytic cleavage activity" evidence="1">
    <location>
        <position position="119"/>
    </location>
</feature>
<feature type="active site" description="For autocatalytic cleavage activity" evidence="1">
    <location>
        <position position="156"/>
    </location>
</feature>
<feature type="site" description="Cleavage; by autolysis" evidence="1">
    <location>
        <begin position="84"/>
        <end position="85"/>
    </location>
</feature>
<protein>
    <recommendedName>
        <fullName evidence="1">LexA repressor</fullName>
        <ecNumber evidence="1">3.4.21.88</ecNumber>
    </recommendedName>
</protein>
<gene>
    <name evidence="1" type="primary">lexA</name>
    <name type="ordered locus">UTI89_C4613</name>
</gene>
<accession>Q1R3P3</accession>
<evidence type="ECO:0000255" key="1">
    <source>
        <dbReference type="HAMAP-Rule" id="MF_00015"/>
    </source>
</evidence>
<sequence length="202" mass="22358">MKALTARQQEVFDLIRDHISQTGMPPTRAEIAQRLGFRSPNAAEEHLKALARKGVIEIVSGASRGIRLLQEEEEGLPLVGRVAAGEPLLAQQHIEGHYQVDPSLFKPNADFLLRVSGMSMKDIGIMDGDLLAVHKTQDVRNGQVVVARIDDEVTVKRLKKQGNKVELLPENSEFKPIVVDLRQQSFTIEGLAVGVIRNGDWL</sequence>
<dbReference type="EC" id="3.4.21.88" evidence="1"/>
<dbReference type="EMBL" id="CP000243">
    <property type="protein sequence ID" value="ABE10021.1"/>
    <property type="molecule type" value="Genomic_DNA"/>
</dbReference>
<dbReference type="RefSeq" id="WP_000646078.1">
    <property type="nucleotide sequence ID" value="NZ_CP064825.1"/>
</dbReference>
<dbReference type="SMR" id="Q1R3P3"/>
<dbReference type="MEROPS" id="S24.001"/>
<dbReference type="ABCD" id="Q1R3P3">
    <property type="antibodies" value="3 sequenced antibodies"/>
</dbReference>
<dbReference type="GeneID" id="93777788"/>
<dbReference type="KEGG" id="eci:UTI89_C4613"/>
<dbReference type="HOGENOM" id="CLU_066192_45_3_6"/>
<dbReference type="Proteomes" id="UP000001952">
    <property type="component" value="Chromosome"/>
</dbReference>
<dbReference type="GO" id="GO:0003677">
    <property type="term" value="F:DNA binding"/>
    <property type="evidence" value="ECO:0007669"/>
    <property type="project" value="UniProtKB-UniRule"/>
</dbReference>
<dbReference type="GO" id="GO:0004252">
    <property type="term" value="F:serine-type endopeptidase activity"/>
    <property type="evidence" value="ECO:0007669"/>
    <property type="project" value="UniProtKB-UniRule"/>
</dbReference>
<dbReference type="GO" id="GO:0006281">
    <property type="term" value="P:DNA repair"/>
    <property type="evidence" value="ECO:0007669"/>
    <property type="project" value="UniProtKB-UniRule"/>
</dbReference>
<dbReference type="GO" id="GO:0006260">
    <property type="term" value="P:DNA replication"/>
    <property type="evidence" value="ECO:0007669"/>
    <property type="project" value="UniProtKB-UniRule"/>
</dbReference>
<dbReference type="GO" id="GO:0045892">
    <property type="term" value="P:negative regulation of DNA-templated transcription"/>
    <property type="evidence" value="ECO:0007669"/>
    <property type="project" value="UniProtKB-UniRule"/>
</dbReference>
<dbReference type="GO" id="GO:0006508">
    <property type="term" value="P:proteolysis"/>
    <property type="evidence" value="ECO:0007669"/>
    <property type="project" value="InterPro"/>
</dbReference>
<dbReference type="GO" id="GO:0009432">
    <property type="term" value="P:SOS response"/>
    <property type="evidence" value="ECO:0007669"/>
    <property type="project" value="UniProtKB-UniRule"/>
</dbReference>
<dbReference type="CDD" id="cd06529">
    <property type="entry name" value="S24_LexA-like"/>
    <property type="match status" value="1"/>
</dbReference>
<dbReference type="FunFam" id="1.10.10.10:FF:000009">
    <property type="entry name" value="LexA repressor"/>
    <property type="match status" value="1"/>
</dbReference>
<dbReference type="FunFam" id="2.10.109.10:FF:000001">
    <property type="entry name" value="LexA repressor"/>
    <property type="match status" value="1"/>
</dbReference>
<dbReference type="Gene3D" id="2.10.109.10">
    <property type="entry name" value="Umud Fragment, subunit A"/>
    <property type="match status" value="1"/>
</dbReference>
<dbReference type="Gene3D" id="1.10.10.10">
    <property type="entry name" value="Winged helix-like DNA-binding domain superfamily/Winged helix DNA-binding domain"/>
    <property type="match status" value="1"/>
</dbReference>
<dbReference type="HAMAP" id="MF_00015">
    <property type="entry name" value="LexA"/>
    <property type="match status" value="1"/>
</dbReference>
<dbReference type="InterPro" id="IPR006200">
    <property type="entry name" value="LexA"/>
</dbReference>
<dbReference type="InterPro" id="IPR039418">
    <property type="entry name" value="LexA-like"/>
</dbReference>
<dbReference type="InterPro" id="IPR036286">
    <property type="entry name" value="LexA/Signal_pep-like_sf"/>
</dbReference>
<dbReference type="InterPro" id="IPR006199">
    <property type="entry name" value="LexA_DNA-bd_dom"/>
</dbReference>
<dbReference type="InterPro" id="IPR050077">
    <property type="entry name" value="LexA_repressor"/>
</dbReference>
<dbReference type="InterPro" id="IPR006197">
    <property type="entry name" value="Peptidase_S24_LexA"/>
</dbReference>
<dbReference type="InterPro" id="IPR015927">
    <property type="entry name" value="Peptidase_S24_S26A/B/C"/>
</dbReference>
<dbReference type="InterPro" id="IPR036388">
    <property type="entry name" value="WH-like_DNA-bd_sf"/>
</dbReference>
<dbReference type="InterPro" id="IPR036390">
    <property type="entry name" value="WH_DNA-bd_sf"/>
</dbReference>
<dbReference type="NCBIfam" id="TIGR00498">
    <property type="entry name" value="lexA"/>
    <property type="match status" value="1"/>
</dbReference>
<dbReference type="PANTHER" id="PTHR33516">
    <property type="entry name" value="LEXA REPRESSOR"/>
    <property type="match status" value="1"/>
</dbReference>
<dbReference type="PANTHER" id="PTHR33516:SF2">
    <property type="entry name" value="LEXA REPRESSOR-RELATED"/>
    <property type="match status" value="1"/>
</dbReference>
<dbReference type="Pfam" id="PF01726">
    <property type="entry name" value="LexA_DNA_bind"/>
    <property type="match status" value="1"/>
</dbReference>
<dbReference type="Pfam" id="PF00717">
    <property type="entry name" value="Peptidase_S24"/>
    <property type="match status" value="1"/>
</dbReference>
<dbReference type="PRINTS" id="PR00726">
    <property type="entry name" value="LEXASERPTASE"/>
</dbReference>
<dbReference type="SUPFAM" id="SSF51306">
    <property type="entry name" value="LexA/Signal peptidase"/>
    <property type="match status" value="1"/>
</dbReference>
<dbReference type="SUPFAM" id="SSF46785">
    <property type="entry name" value="Winged helix' DNA-binding domain"/>
    <property type="match status" value="1"/>
</dbReference>
<keyword id="KW-0068">Autocatalytic cleavage</keyword>
<keyword id="KW-0227">DNA damage</keyword>
<keyword id="KW-0234">DNA repair</keyword>
<keyword id="KW-0235">DNA replication</keyword>
<keyword id="KW-0238">DNA-binding</keyword>
<keyword id="KW-0378">Hydrolase</keyword>
<keyword id="KW-0678">Repressor</keyword>
<keyword id="KW-0742">SOS response</keyword>
<keyword id="KW-0804">Transcription</keyword>
<keyword id="KW-0805">Transcription regulation</keyword>
<name>LEXA_ECOUT</name>
<organism>
    <name type="scientific">Escherichia coli (strain UTI89 / UPEC)</name>
    <dbReference type="NCBI Taxonomy" id="364106"/>
    <lineage>
        <taxon>Bacteria</taxon>
        <taxon>Pseudomonadati</taxon>
        <taxon>Pseudomonadota</taxon>
        <taxon>Gammaproteobacteria</taxon>
        <taxon>Enterobacterales</taxon>
        <taxon>Enterobacteriaceae</taxon>
        <taxon>Escherichia</taxon>
    </lineage>
</organism>
<proteinExistence type="inferred from homology"/>
<comment type="function">
    <text evidence="1">Represses a number of genes involved in the response to DNA damage (SOS response), including recA and lexA. Binds to the 16 bp palindromic sequence 5'-CTGTATATATATACAG-3'. In the presence of single-stranded DNA, RecA interacts with LexA causing an autocatalytic cleavage which disrupts the DNA-binding part of LexA, leading to derepression of the SOS regulon and eventually DNA repair.</text>
</comment>
<comment type="catalytic activity">
    <reaction evidence="1">
        <text>Hydrolysis of Ala-|-Gly bond in repressor LexA.</text>
        <dbReference type="EC" id="3.4.21.88"/>
    </reaction>
</comment>
<comment type="subunit">
    <text evidence="1">Homodimer.</text>
</comment>
<comment type="similarity">
    <text evidence="1">Belongs to the peptidase S24 family.</text>
</comment>